<organism>
    <name type="scientific">Haemophilus influenzae (strain ATCC 51907 / DSM 11121 / KW20 / Rd)</name>
    <dbReference type="NCBI Taxonomy" id="71421"/>
    <lineage>
        <taxon>Bacteria</taxon>
        <taxon>Pseudomonadati</taxon>
        <taxon>Pseudomonadota</taxon>
        <taxon>Gammaproteobacteria</taxon>
        <taxon>Pasteurellales</taxon>
        <taxon>Pasteurellaceae</taxon>
        <taxon>Haemophilus</taxon>
    </lineage>
</organism>
<gene>
    <name evidence="1" type="primary">lpxL</name>
    <name type="synonym">htrB</name>
    <name type="synonym">waaM</name>
    <name type="ordered locus">HI_1527</name>
</gene>
<protein>
    <recommendedName>
        <fullName evidence="1">Lipid A biosynthesis acyltransferase</fullName>
        <ecNumber evidence="1">2.3.1.241</ecNumber>
    </recommendedName>
    <alternativeName>
        <fullName evidence="1">Kdo(2)-lipid IV(A) acyltransferase</fullName>
    </alternativeName>
</protein>
<feature type="chain" id="PRO_0000201776" description="Lipid A biosynthesis acyltransferase">
    <location>
        <begin position="1"/>
        <end position="311"/>
    </location>
</feature>
<feature type="transmembrane region" description="Helical" evidence="1">
    <location>
        <begin position="19"/>
        <end position="39"/>
    </location>
</feature>
<feature type="short sequence motif" description="HXXXXD motif" evidence="1">
    <location>
        <begin position="134"/>
        <end position="139"/>
    </location>
</feature>
<feature type="sequence conflict" description="In Ref. 2; AAC43515." evidence="2" ref="2">
    <original>E</original>
    <variation>K</variation>
    <location>
        <position position="57"/>
    </location>
</feature>
<feature type="sequence conflict" description="In Ref. 2; AAC43515." evidence="2" ref="2">
    <original>V</original>
    <variation>T</variation>
    <location>
        <position position="81"/>
    </location>
</feature>
<feature type="sequence conflict" description="In Ref. 2; AAC43515." evidence="2" ref="2">
    <original>T</original>
    <variation>V</variation>
    <location>
        <position position="270"/>
    </location>
</feature>
<feature type="sequence conflict" description="In Ref. 2; AAC43515." evidence="2" ref="2">
    <original>A</original>
    <variation>V</variation>
    <location>
        <position position="274"/>
    </location>
</feature>
<feature type="sequence conflict" description="In Ref. 2; AAC43515." evidence="2" ref="2">
    <original>DITI</original>
    <variation>GISQ</variation>
    <location>
        <begin position="287"/>
        <end position="290"/>
    </location>
</feature>
<feature type="sequence conflict" description="In Ref. 2; AAC43515." evidence="2" ref="2">
    <original>K</original>
    <variation>N</variation>
    <location>
        <position position="305"/>
    </location>
</feature>
<accession>P45239</accession>
<accession>Q48045</accession>
<proteinExistence type="inferred from homology"/>
<name>LPXL_HAEIN</name>
<comment type="function">
    <text evidence="1">Catalyzes the transfer of an acyl chain from an acyl-[acyl-carrier-protein] (ACP) to a Kdo(2)-lipid IV(A) to form a Kdo(2)-(acyl)-lipid IV(A).</text>
</comment>
<comment type="catalytic activity">
    <reaction evidence="1">
        <text>an alpha-Kdo-(2-&gt;4)-alpha-Kdo-(2-&gt;6)-lipid IVA + a fatty acyl-[ACP] = an alpha-Kdo-(2-&gt;4)-alpha-Kdo-(2-&gt;6)-(acyl)-lipid IVA + holo-[ACP]</text>
        <dbReference type="Rhea" id="RHEA:69396"/>
        <dbReference type="Rhea" id="RHEA-COMP:9685"/>
        <dbReference type="Rhea" id="RHEA-COMP:14125"/>
        <dbReference type="ChEBI" id="CHEBI:64479"/>
        <dbReference type="ChEBI" id="CHEBI:138651"/>
        <dbReference type="ChEBI" id="CHEBI:176429"/>
        <dbReference type="ChEBI" id="CHEBI:176430"/>
        <dbReference type="EC" id="2.3.1.241"/>
    </reaction>
</comment>
<comment type="pathway">
    <text evidence="1">Glycolipid biosynthesis; KDO(2)-lipid A biosynthesis; KDO(2)-lipid A from CMP-3-deoxy-D-manno-octulosonate and lipid IV(A): step 3/4.</text>
</comment>
<comment type="pathway">
    <text evidence="1">Bacterial outer membrane biogenesis; lipopolysaccharide biosynthesis.</text>
</comment>
<comment type="subcellular location">
    <subcellularLocation>
        <location evidence="1">Cell inner membrane</location>
        <topology evidence="1">Single-pass membrane protein</topology>
    </subcellularLocation>
</comment>
<comment type="similarity">
    <text evidence="1">Belongs to the LpxL/LpxM/LpxP family.</text>
</comment>
<comment type="sequence caution" evidence="2">
    <conflict type="erroneous initiation">
        <sequence resource="EMBL-CDS" id="AAC23173"/>
    </conflict>
    <text>Extended N-terminus.</text>
</comment>
<reference key="1">
    <citation type="journal article" date="1995" name="Science">
        <title>Whole-genome random sequencing and assembly of Haemophilus influenzae Rd.</title>
        <authorList>
            <person name="Fleischmann R.D."/>
            <person name="Adams M.D."/>
            <person name="White O."/>
            <person name="Clayton R.A."/>
            <person name="Kirkness E.F."/>
            <person name="Kerlavage A.R."/>
            <person name="Bult C.J."/>
            <person name="Tomb J.-F."/>
            <person name="Dougherty B.A."/>
            <person name="Merrick J.M."/>
            <person name="McKenney K."/>
            <person name="Sutton G.G."/>
            <person name="FitzHugh W."/>
            <person name="Fields C.A."/>
            <person name="Gocayne J.D."/>
            <person name="Scott J.D."/>
            <person name="Shirley R."/>
            <person name="Liu L.-I."/>
            <person name="Glodek A."/>
            <person name="Kelley J.M."/>
            <person name="Weidman J.F."/>
            <person name="Phillips C.A."/>
            <person name="Spriggs T."/>
            <person name="Hedblom E."/>
            <person name="Cotton M.D."/>
            <person name="Utterback T.R."/>
            <person name="Hanna M.C."/>
            <person name="Nguyen D.T."/>
            <person name="Saudek D.M."/>
            <person name="Brandon R.C."/>
            <person name="Fine L.D."/>
            <person name="Fritchman J.L."/>
            <person name="Fuhrmann J.L."/>
            <person name="Geoghagen N.S.M."/>
            <person name="Gnehm C.L."/>
            <person name="McDonald L.A."/>
            <person name="Small K.V."/>
            <person name="Fraser C.M."/>
            <person name="Smith H.O."/>
            <person name="Venter J.C."/>
        </authorList>
    </citation>
    <scope>NUCLEOTIDE SEQUENCE [LARGE SCALE GENOMIC DNA]</scope>
    <source>
        <strain>ATCC 51907 / DSM 11121 / KW20 / Rd</strain>
    </source>
</reference>
<reference key="2">
    <citation type="journal article" date="1995" name="J. Biol. Chem.">
        <title>Mutation of the htrB locus of Haemophilus influenzae nontypable strain 2019 is associated with modifications of lipid A and phosphorylation of the lipo-oligosaccharide.</title>
        <authorList>
            <person name="Lee N.-G."/>
            <person name="Sunshine M.G."/>
            <person name="Engstrom J.J."/>
            <person name="Gibson B.W."/>
            <person name="Apicella M.A."/>
        </authorList>
    </citation>
    <scope>NUCLEOTIDE SEQUENCE [GENOMIC DNA]</scope>
    <source>
        <strain>NTHi 2019</strain>
    </source>
</reference>
<evidence type="ECO:0000255" key="1">
    <source>
        <dbReference type="HAMAP-Rule" id="MF_01942"/>
    </source>
</evidence>
<evidence type="ECO:0000305" key="2"/>
<dbReference type="EC" id="2.3.1.241" evidence="1"/>
<dbReference type="EMBL" id="L42023">
    <property type="protein sequence ID" value="AAC23173.1"/>
    <property type="status" value="ALT_INIT"/>
    <property type="molecule type" value="Genomic_DNA"/>
</dbReference>
<dbReference type="EMBL" id="U17642">
    <property type="protein sequence ID" value="AAC43515.1"/>
    <property type="molecule type" value="Genomic_DNA"/>
</dbReference>
<dbReference type="PIR" id="D64127">
    <property type="entry name" value="D64127"/>
</dbReference>
<dbReference type="RefSeq" id="NP_439676.2">
    <property type="nucleotide sequence ID" value="NC_000907.1"/>
</dbReference>
<dbReference type="SMR" id="P45239"/>
<dbReference type="STRING" id="71421.HI_1527"/>
<dbReference type="EnsemblBacteria" id="AAC23173">
    <property type="protein sequence ID" value="AAC23173"/>
    <property type="gene ID" value="HI_1527"/>
</dbReference>
<dbReference type="KEGG" id="hin:HI_1527"/>
<dbReference type="PATRIC" id="fig|71421.8.peg.1598"/>
<dbReference type="eggNOG" id="COG1560">
    <property type="taxonomic scope" value="Bacteria"/>
</dbReference>
<dbReference type="HOGENOM" id="CLU_049421_1_1_6"/>
<dbReference type="OrthoDB" id="9803456at2"/>
<dbReference type="PhylomeDB" id="P45239"/>
<dbReference type="BioCyc" id="HINF71421:G1GJ1-1549-MONOMER"/>
<dbReference type="UniPathway" id="UPA00030"/>
<dbReference type="UniPathway" id="UPA00360">
    <property type="reaction ID" value="UER00485"/>
</dbReference>
<dbReference type="Proteomes" id="UP000000579">
    <property type="component" value="Chromosome"/>
</dbReference>
<dbReference type="GO" id="GO:0016020">
    <property type="term" value="C:membrane"/>
    <property type="evidence" value="ECO:0000318"/>
    <property type="project" value="GO_Central"/>
</dbReference>
<dbReference type="GO" id="GO:0005886">
    <property type="term" value="C:plasma membrane"/>
    <property type="evidence" value="ECO:0007669"/>
    <property type="project" value="UniProtKB-SubCell"/>
</dbReference>
<dbReference type="GO" id="GO:0016746">
    <property type="term" value="F:acyltransferase activity"/>
    <property type="evidence" value="ECO:0000318"/>
    <property type="project" value="GO_Central"/>
</dbReference>
<dbReference type="GO" id="GO:0008913">
    <property type="term" value="F:Kdo2-lipid IVA acyltransferase activity"/>
    <property type="evidence" value="ECO:0007669"/>
    <property type="project" value="UniProtKB-EC"/>
</dbReference>
<dbReference type="GO" id="GO:0036104">
    <property type="term" value="P:Kdo2-lipid A biosynthetic process"/>
    <property type="evidence" value="ECO:0007669"/>
    <property type="project" value="UniProtKB-UniRule"/>
</dbReference>
<dbReference type="GO" id="GO:0009245">
    <property type="term" value="P:lipid A biosynthetic process"/>
    <property type="evidence" value="ECO:0000318"/>
    <property type="project" value="GO_Central"/>
</dbReference>
<dbReference type="GO" id="GO:0009103">
    <property type="term" value="P:lipopolysaccharide biosynthetic process"/>
    <property type="evidence" value="ECO:0007669"/>
    <property type="project" value="UniProtKB-UniRule"/>
</dbReference>
<dbReference type="CDD" id="cd07984">
    <property type="entry name" value="LPLAT_LABLAT-like"/>
    <property type="match status" value="1"/>
</dbReference>
<dbReference type="HAMAP" id="MF_01942">
    <property type="entry name" value="Lipid_A_LpxL_LpxP"/>
    <property type="match status" value="1"/>
</dbReference>
<dbReference type="InterPro" id="IPR004960">
    <property type="entry name" value="LipA_acyltrans"/>
</dbReference>
<dbReference type="InterPro" id="IPR011920">
    <property type="entry name" value="Lipid_A_LpxL_LpxP"/>
</dbReference>
<dbReference type="NCBIfam" id="TIGR02207">
    <property type="entry name" value="lipid_A_htrB"/>
    <property type="match status" value="1"/>
</dbReference>
<dbReference type="NCBIfam" id="NF005340">
    <property type="entry name" value="PRK06860.1"/>
    <property type="match status" value="1"/>
</dbReference>
<dbReference type="PANTHER" id="PTHR30606">
    <property type="entry name" value="LIPID A BIOSYNTHESIS LAUROYL ACYLTRANSFERASE"/>
    <property type="match status" value="1"/>
</dbReference>
<dbReference type="PANTHER" id="PTHR30606:SF9">
    <property type="entry name" value="LIPID A BIOSYNTHESIS LAUROYLTRANSFERASE"/>
    <property type="match status" value="1"/>
</dbReference>
<dbReference type="Pfam" id="PF03279">
    <property type="entry name" value="Lip_A_acyltrans"/>
    <property type="match status" value="1"/>
</dbReference>
<dbReference type="PIRSF" id="PIRSF026649">
    <property type="entry name" value="MsbB"/>
    <property type="match status" value="1"/>
</dbReference>
<sequence length="311" mass="36152">MKNEKLPQFQPHFLAPKYWLFWLGVAIWRSILCLPYPILRHIGHGFGWLFSHLKVGERRAAIARRNLELCFPDMPENEREVILQENLRSVGMAIIETGMAWFWSDSRIKKWSKVEGLHYLKENQKDGIVLVGVHFLTLELGARIIGLHHPGIGVYRPNDNPLLDWLQTQGRLRSNKDMLDRKDLRGMIKALRHEETIWYAPDHDYGRKNAVFVPFFAVPDTCTTTGSYYLLKSSQNSKVIPFAPLRNKDGSGYTVSISAPVDFTDLQDETAIAARMNQIVEKEIMKDITIYMWLHRRFKTRPDEKTPSLYD</sequence>
<keyword id="KW-0012">Acyltransferase</keyword>
<keyword id="KW-0997">Cell inner membrane</keyword>
<keyword id="KW-1003">Cell membrane</keyword>
<keyword id="KW-0448">Lipopolysaccharide biosynthesis</keyword>
<keyword id="KW-0472">Membrane</keyword>
<keyword id="KW-1185">Reference proteome</keyword>
<keyword id="KW-0346">Stress response</keyword>
<keyword id="KW-0808">Transferase</keyword>
<keyword id="KW-0812">Transmembrane</keyword>
<keyword id="KW-1133">Transmembrane helix</keyword>